<keyword id="KW-0150">Chloroplast</keyword>
<keyword id="KW-0240">DNA-directed RNA polymerase</keyword>
<keyword id="KW-0479">Metal-binding</keyword>
<keyword id="KW-0548">Nucleotidyltransferase</keyword>
<keyword id="KW-0934">Plastid</keyword>
<keyword id="KW-0804">Transcription</keyword>
<keyword id="KW-0808">Transferase</keyword>
<keyword id="KW-0862">Zinc</keyword>
<protein>
    <recommendedName>
        <fullName evidence="1">DNA-directed RNA polymerase subunit beta''</fullName>
        <ecNumber evidence="1">2.7.7.6</ecNumber>
    </recommendedName>
    <alternativeName>
        <fullName evidence="1">PEP</fullName>
    </alternativeName>
    <alternativeName>
        <fullName evidence="1">Plastid-encoded RNA polymerase subunit beta''</fullName>
        <shortName evidence="1">RNA polymerase subunit beta''</shortName>
    </alternativeName>
</protein>
<name>RPOC2_DRIGR</name>
<organism>
    <name type="scientific">Drimys granadensis</name>
    <dbReference type="NCBI Taxonomy" id="224735"/>
    <lineage>
        <taxon>Eukaryota</taxon>
        <taxon>Viridiplantae</taxon>
        <taxon>Streptophyta</taxon>
        <taxon>Embryophyta</taxon>
        <taxon>Tracheophyta</taxon>
        <taxon>Spermatophyta</taxon>
        <taxon>Magnoliopsida</taxon>
        <taxon>Magnoliidae</taxon>
        <taxon>Canellales</taxon>
        <taxon>Winteraceae</taxon>
        <taxon>Drimys</taxon>
    </lineage>
</organism>
<sequence>MEVLMAERADLVFHNKVIDGTAMKRLISRLIDHFGMAYTSHILDQVKTMGFQQATATSISLGIDDLLTIPSKGWLVQDAEQQSLILEKHHHYGNVHAVEKLRQSIEIWYATSEYLRQEMHPNFRMTDPSNPVHIMSFSGARGNASQVHQLVGMRGLMSDPQGQMIDLPIQSNLREGLSLTEYLISCYGARKGVVDTAVRTSDAGYLTRRLVEVVQHIVVRRTDCGTIRGISVSPRNGIGMTEKMLIQTLIGRVLADDIYMGLRCIAARNQDIGVGLVNRFIAFRAQSIYIRTPFICRSTSWICRLCYGRSPTHGDLVELGEAVGIIAGQSIGEPGTQLTLRTFHTGGVFTGGTAEHVRAPFNGKIKFNEDLVHPTRTRHGHPAFLCYIDLYVTIESQDILHNVNIPPKSFLLVQNDQYVESEQVIAEIRARTSTFNFKERVRKHIYSDSEGEMHWSTDVYHAPEYTYGNVHLLPKTSHLWILSGGPRRSSLVPFSLHKDQDQMNIHSLSVEQRESSDLSVTNDRARHKLFSSDPSGKKEGKILDYSGPARIISNGHWNFIYPAILHENSYLLAKRRRNRFIIPFQYDQEREKELMPRSGISIEIPINGILRRNSILAYFDDPRYRRSSSGITKYGTVEVDSIVKKEDLIEYRGAKEFSPKYQMKVDRFFFIPEEVHILPGSSSIMVRNNSIIGVDTRITLNTRSRIGGLVRVERKKKRIELKIFSGDIHFPGEADKISRHSGILIPPGTGKKNSKESKKLQNWIYVQRITPTKKKYFVSVRPVVTYEIADGINLATLFPQDLLQERDNVKFRVVNSILYRNGKPIRGIYYTSIQLVRTCLVLNWDQDRNGSIEKVKASIVEVRANDLIRDFIRIDLVKSPISYTGKRNDMAGSGLIPDNGSDHTNINPFYSKVRRIQSLTQHQGTIRTLLNRNKECQSFLILSSSNCSRIGPFNGSKSHNVTKESIQIKEDPMIPIRNSLGPLGTVPKIANFDSPYYLITHNQILLNKYLLLDNLKQTFQVLKYYLMDENGRIYNPYPCRNIIFHPFDLTWCFLHHDYCEKTSTIIVLGQFICENENVCISKYGPQIKSGQVLIVHVDSLVIRSAKPHLATPGATVHGHYGEILYEGDTLVTFIYEKSRSGDITQGLPKVEQVLEVRSVDSISMNLEKRVEGWNEHIKRILGIPWGFLIGAELTIAQSRISLVNKIQKVYRSQGVQIHNRHIEIIVRQITSKVLVSEDGMSNVFSPGELIGLLRAERTGRSLEEAICYRAILWGITRASLNTQSFISEASFQETARVLAKAALRGRIDWLKGLKENVVLGGMIPVGTGFKGLVHRSRQDNNIPLEIKKKNLFEGEIRDILFHHRELFGSCIPNNFHNTPEQ</sequence>
<reference key="1">
    <citation type="journal article" date="2006" name="BMC Evol. Biol.">
        <title>Complete plastid genome sequences of Drimys, Liriodendron, and Piper: implications for the phylogenetic relationships of magnoliids.</title>
        <authorList>
            <person name="Cai Z."/>
            <person name="Penaflor C."/>
            <person name="Kuehl J.V."/>
            <person name="Leebens-Mack J."/>
            <person name="Carlson J.E."/>
            <person name="dePamphilis C.W."/>
            <person name="Boore J.L."/>
            <person name="Jansen R.K."/>
        </authorList>
    </citation>
    <scope>NUCLEOTIDE SEQUENCE [LARGE SCALE GENOMIC DNA]</scope>
</reference>
<comment type="function">
    <text evidence="1">DNA-dependent RNA polymerase catalyzes the transcription of DNA into RNA using the four ribonucleoside triphosphates as substrates.</text>
</comment>
<comment type="catalytic activity">
    <reaction evidence="1">
        <text>RNA(n) + a ribonucleoside 5'-triphosphate = RNA(n+1) + diphosphate</text>
        <dbReference type="Rhea" id="RHEA:21248"/>
        <dbReference type="Rhea" id="RHEA-COMP:14527"/>
        <dbReference type="Rhea" id="RHEA-COMP:17342"/>
        <dbReference type="ChEBI" id="CHEBI:33019"/>
        <dbReference type="ChEBI" id="CHEBI:61557"/>
        <dbReference type="ChEBI" id="CHEBI:140395"/>
        <dbReference type="EC" id="2.7.7.6"/>
    </reaction>
</comment>
<comment type="cofactor">
    <cofactor evidence="1">
        <name>Zn(2+)</name>
        <dbReference type="ChEBI" id="CHEBI:29105"/>
    </cofactor>
    <text evidence="1">Binds 1 Zn(2+) ion per subunit.</text>
</comment>
<comment type="subunit">
    <text evidence="1">In plastids the minimal PEP RNA polymerase catalytic core is composed of four subunits: alpha, beta, beta', and beta''. When a (nuclear-encoded) sigma factor is associated with the core the holoenzyme is formed, which can initiate transcription.</text>
</comment>
<comment type="subcellular location">
    <subcellularLocation>
        <location evidence="1">Plastid</location>
        <location evidence="1">Chloroplast</location>
    </subcellularLocation>
</comment>
<comment type="similarity">
    <text evidence="1">Belongs to the RNA polymerase beta' chain family. RpoC2 subfamily.</text>
</comment>
<gene>
    <name evidence="1" type="primary">rpoC2</name>
</gene>
<proteinExistence type="inferred from homology"/>
<accession>Q06H07</accession>
<dbReference type="EC" id="2.7.7.6" evidence="1"/>
<dbReference type="EMBL" id="DQ887676">
    <property type="protein sequence ID" value="ABH88287.1"/>
    <property type="molecule type" value="Genomic_DNA"/>
</dbReference>
<dbReference type="RefSeq" id="YP_784376.1">
    <property type="nucleotide sequence ID" value="NC_008456.1"/>
</dbReference>
<dbReference type="SMR" id="Q06H07"/>
<dbReference type="GeneID" id="4363642"/>
<dbReference type="GO" id="GO:0009507">
    <property type="term" value="C:chloroplast"/>
    <property type="evidence" value="ECO:0007669"/>
    <property type="project" value="UniProtKB-SubCell"/>
</dbReference>
<dbReference type="GO" id="GO:0000428">
    <property type="term" value="C:DNA-directed RNA polymerase complex"/>
    <property type="evidence" value="ECO:0007669"/>
    <property type="project" value="UniProtKB-KW"/>
</dbReference>
<dbReference type="GO" id="GO:0005739">
    <property type="term" value="C:mitochondrion"/>
    <property type="evidence" value="ECO:0007669"/>
    <property type="project" value="GOC"/>
</dbReference>
<dbReference type="GO" id="GO:0003677">
    <property type="term" value="F:DNA binding"/>
    <property type="evidence" value="ECO:0007669"/>
    <property type="project" value="UniProtKB-UniRule"/>
</dbReference>
<dbReference type="GO" id="GO:0003899">
    <property type="term" value="F:DNA-directed RNA polymerase activity"/>
    <property type="evidence" value="ECO:0007669"/>
    <property type="project" value="UniProtKB-UniRule"/>
</dbReference>
<dbReference type="GO" id="GO:0008270">
    <property type="term" value="F:zinc ion binding"/>
    <property type="evidence" value="ECO:0007669"/>
    <property type="project" value="UniProtKB-UniRule"/>
</dbReference>
<dbReference type="GO" id="GO:0006351">
    <property type="term" value="P:DNA-templated transcription"/>
    <property type="evidence" value="ECO:0007669"/>
    <property type="project" value="UniProtKB-UniRule"/>
</dbReference>
<dbReference type="CDD" id="cd02655">
    <property type="entry name" value="RNAP_beta'_C"/>
    <property type="match status" value="1"/>
</dbReference>
<dbReference type="FunFam" id="1.10.132.30:FF:000002">
    <property type="entry name" value="DNA-directed RNA polymerase subunit beta"/>
    <property type="match status" value="1"/>
</dbReference>
<dbReference type="FunFam" id="1.10.1790.20:FF:000002">
    <property type="entry name" value="DNA-directed RNA polymerase subunit beta"/>
    <property type="match status" value="1"/>
</dbReference>
<dbReference type="Gene3D" id="1.10.132.30">
    <property type="match status" value="1"/>
</dbReference>
<dbReference type="Gene3D" id="1.10.150.390">
    <property type="match status" value="1"/>
</dbReference>
<dbReference type="Gene3D" id="1.10.1790.20">
    <property type="match status" value="1"/>
</dbReference>
<dbReference type="Gene3D" id="1.10.274.100">
    <property type="entry name" value="RNA polymerase Rpb1, domain 3"/>
    <property type="match status" value="1"/>
</dbReference>
<dbReference type="HAMAP" id="MF_01324">
    <property type="entry name" value="RNApol_bact_RpoC2"/>
    <property type="match status" value="1"/>
</dbReference>
<dbReference type="InterPro" id="IPR012756">
    <property type="entry name" value="DNA-dir_RpoC2_beta_pp"/>
</dbReference>
<dbReference type="InterPro" id="IPR050254">
    <property type="entry name" value="RNA_pol_beta''_euk"/>
</dbReference>
<dbReference type="InterPro" id="IPR042102">
    <property type="entry name" value="RNA_pol_Rpb1_3_sf"/>
</dbReference>
<dbReference type="InterPro" id="IPR007083">
    <property type="entry name" value="RNA_pol_Rpb1_4"/>
</dbReference>
<dbReference type="InterPro" id="IPR007081">
    <property type="entry name" value="RNA_pol_Rpb1_5"/>
</dbReference>
<dbReference type="InterPro" id="IPR038120">
    <property type="entry name" value="Rpb1_funnel_sf"/>
</dbReference>
<dbReference type="NCBIfam" id="TIGR02388">
    <property type="entry name" value="rpoC2_cyan"/>
    <property type="match status" value="1"/>
</dbReference>
<dbReference type="PANTHER" id="PTHR34995">
    <property type="entry name" value="DNA-DIRECTED RNA POLYMERASE SUBUNIT BETA"/>
    <property type="match status" value="1"/>
</dbReference>
<dbReference type="PANTHER" id="PTHR34995:SF1">
    <property type="entry name" value="DNA-DIRECTED RNA POLYMERASE SUBUNIT BETA"/>
    <property type="match status" value="1"/>
</dbReference>
<dbReference type="Pfam" id="PF05000">
    <property type="entry name" value="RNA_pol_Rpb1_4"/>
    <property type="match status" value="1"/>
</dbReference>
<dbReference type="Pfam" id="PF04998">
    <property type="entry name" value="RNA_pol_Rpb1_5"/>
    <property type="match status" value="2"/>
</dbReference>
<dbReference type="SUPFAM" id="SSF64484">
    <property type="entry name" value="beta and beta-prime subunits of DNA dependent RNA-polymerase"/>
    <property type="match status" value="1"/>
</dbReference>
<feature type="chain" id="PRO_0000277189" description="DNA-directed RNA polymerase subunit beta''">
    <location>
        <begin position="1"/>
        <end position="1381"/>
    </location>
</feature>
<feature type="binding site" evidence="1">
    <location>
        <position position="224"/>
    </location>
    <ligand>
        <name>Zn(2+)</name>
        <dbReference type="ChEBI" id="CHEBI:29105"/>
    </ligand>
</feature>
<feature type="binding site" evidence="1">
    <location>
        <position position="296"/>
    </location>
    <ligand>
        <name>Zn(2+)</name>
        <dbReference type="ChEBI" id="CHEBI:29105"/>
    </ligand>
</feature>
<feature type="binding site" evidence="1">
    <location>
        <position position="303"/>
    </location>
    <ligand>
        <name>Zn(2+)</name>
        <dbReference type="ChEBI" id="CHEBI:29105"/>
    </ligand>
</feature>
<feature type="binding site" evidence="1">
    <location>
        <position position="306"/>
    </location>
    <ligand>
        <name>Zn(2+)</name>
        <dbReference type="ChEBI" id="CHEBI:29105"/>
    </ligand>
</feature>
<evidence type="ECO:0000255" key="1">
    <source>
        <dbReference type="HAMAP-Rule" id="MF_01324"/>
    </source>
</evidence>
<geneLocation type="chloroplast"/>